<proteinExistence type="evidence at protein level"/>
<organism>
    <name type="scientific">Rattus norvegicus</name>
    <name type="common">Rat</name>
    <dbReference type="NCBI Taxonomy" id="10116"/>
    <lineage>
        <taxon>Eukaryota</taxon>
        <taxon>Metazoa</taxon>
        <taxon>Chordata</taxon>
        <taxon>Craniata</taxon>
        <taxon>Vertebrata</taxon>
        <taxon>Euteleostomi</taxon>
        <taxon>Mammalia</taxon>
        <taxon>Eutheria</taxon>
        <taxon>Euarchontoglires</taxon>
        <taxon>Glires</taxon>
        <taxon>Rodentia</taxon>
        <taxon>Myomorpha</taxon>
        <taxon>Muroidea</taxon>
        <taxon>Muridae</taxon>
        <taxon>Murinae</taxon>
        <taxon>Rattus</taxon>
    </lineage>
</organism>
<evidence type="ECO:0000250" key="1"/>
<evidence type="ECO:0000250" key="2">
    <source>
        <dbReference type="UniProtKB" id="P21271"/>
    </source>
</evidence>
<evidence type="ECO:0000250" key="3">
    <source>
        <dbReference type="UniProtKB" id="Q9ULV0"/>
    </source>
</evidence>
<evidence type="ECO:0000255" key="4"/>
<evidence type="ECO:0000255" key="5">
    <source>
        <dbReference type="PROSITE-ProRule" id="PRU00116"/>
    </source>
</evidence>
<evidence type="ECO:0000255" key="6">
    <source>
        <dbReference type="PROSITE-ProRule" id="PRU00503"/>
    </source>
</evidence>
<evidence type="ECO:0000255" key="7">
    <source>
        <dbReference type="PROSITE-ProRule" id="PRU00782"/>
    </source>
</evidence>
<evidence type="ECO:0000255" key="8">
    <source>
        <dbReference type="PROSITE-ProRule" id="PRU01190"/>
    </source>
</evidence>
<evidence type="ECO:0000256" key="9">
    <source>
        <dbReference type="SAM" id="MobiDB-lite"/>
    </source>
</evidence>
<evidence type="ECO:0000269" key="10">
    <source>
    </source>
</evidence>
<evidence type="ECO:0000305" key="11"/>
<sequence>MTYSELYSRYTRVWIPDPDEVWRSAELTKDYKDGDESLQLRLEDDTILDYPIDVQNNQVPFLRNPDILVGENDLTALSHLHEPAVLHNLKVRFLESNHIYTYCGIVLVAINPYEQLPIYGQDVIYAYSGQNMGDMDPHIFAVAEEAYKQMARDEKNQSIIVSGESGAGKTVSAKYAMRYFATVGGSASDTNIEEKVLASSPIMEAIGNAKTTRNDNSSRFGKYIEIGFDKKYHIIGANMRTYLLEKSRVVFQADDERNYHIFYQLCAAASLPEFKELALTCAEDFFYTAHGGNTTIEGVDDAEDFEKTRQALTLLGVRESHQISIFKIIASILHLGSVEIQAERDGDSCSISPQDEHLSNFCRLLGIEHSQMEHWLCHRKLVTTSETYVKTMSLQQVVNARNALAKHIYAQLFSWIVEHINKALQTSLKQHSFIGVLDIYGFETFEINSFEQFCINYANEKLQQQFNSHVFKLEQEEYMKEQIPWTLIDFYDNQPCIDLIEAKLGILDLLDEECKVPKGTDQNWAQKLYERHSNSQHFQKPRMSNTAFIVIHFADKVEYLSDGFLEKNRDTVYEEQINILKASKFPLVADLFRDDEDSVPATNTAKSRSSSKINVRSSRPLMKAPNKEHKKSVGYQFRTSLNLLMETLNATTPHYVRCIKPNDEKLPFHFDPKRAVQQLRACGVLETIRISAAGYPSRWTYHDFFNRYRVLMKKRELANTTDKKNICKSVLESLIKDPDKFQFGRTKIFFRAGQVAYLEKLRADKFREATIMIQKTVRGWLQRVKYRRLRAATLTLQRFCRGYLARRLTEHLRRTRAAIVFQKQYRMLKARRAYCRVRRAAVIIQSYTRGHVCTQKLPPVLTEHKATIIQKYARGWMARRHFQRQRDAAIVIQCAFRRLKARQALKALKIEARSAEHLKRLNVGMENKVVQLQRKIDDQNKEFKTLSEQLSAVTSTHAMEVEKLKKELARYQQNQEADPSLQLQEEVQSLRTELQKAHSERRVLEDAHNRENGELRKRVADLEHENALLKDEKEHLNHQILRQSKAESSQSSVEENLLIKKELEEERSRYQNLVKEYSQLEQRYENLRDEQQTPGHRKNPSNQSSLESDSNYPSISTSEIGDTEDALQQVEEIGIEKAAMDMTVFLKLQKRVRELEQERKKLQVQLEKEQQDSKKVQVEQQNNGLDVDQDADIAYNSLKRQELESENKKLKNDLNERWKAVADQAMQDNSTHSSPDSYSLLLNQLKLANEELEVRKEEVLILRTQIMNADQRRLSGKNMEPNINARTSWPNSEKHVDQEDAIEAYHGVCQTNSQTEDWGYLNEDGELGLAYQGLKQVARLLEAQLQAQNLKHEEEVEHLKAQVEAMKEEMDKQQQTFCQTLLLSPEAQVEFGVQQEISRLTNENLDFKELVEKLEKNEKKLKKQLKIYMKKVQDLEAAQALAQSDRRHHELTRQVTVQRKEKDFQGMLEYHKEDEALLIRNLVTDLKPQMLSGTVPCLPAYILYMCIRHADYTNDDLKVHSLLSSTINGIKKVLKKHNEDFEMTSFWLSNTCRLLHCLKQYSGDEGFMTQNTAKQNEHCLKNFDLTEYRQVLSDLSIQIYQQLIKIAEGLLQPMIVSAMLENESIQGLSGVRPTGYRKRSSSMVDGENSYCLEAIIRQMNFFHTVLCDQGLDPEIILQVFKQLFYMINAVTLNNLLLRKDACSWSTGMQLRYNISQLEEWLRGKNLQQSGAVQTMEPLIQAAQLLQLKKKTQEDAEAICSLCTSLSTQQIVKILNLYTPLNGFEERVTVSFIRTIQAQLQERSDPQQLLLDSKHMFPVLFPFNPSALTMDSIHIPACLNLEFLNEV</sequence>
<comment type="function">
    <text evidence="3">May be involved in vesicular trafficking via its association with the CART complex. The CART complex is necessary for efficient transferrin receptor recycling but not for EGFR degradation. Required in a complex with RAB11A and RAB11FIP2 for the transport of NPC1L1 to the plasma membrane. Together with RAB11A participates in CFTR trafficking to the plasma membrane and TF (transferrin) recycling in nonpolarized cells. Together with RAB11A and RAB8A participates in epithelial cell polarization. Together with RAB25 regulates transcytosis. Required for proper localization of bile salt export pump ABCB11 at the apical/canalicular plasma membrane of hepatocytes.</text>
</comment>
<comment type="subunit">
    <text evidence="1 2">Component of the CART complex, at least composed of ACTN4, HGS/HRS, MYO5B and TRIM3. Interacts with RAB11FIP2 (By similarity). Interacts with RAB11A and RAB8A (By similarity). Found in a complex with CFTR and RAB11A (By similarity). Interacts with NPC1L1 (By similarity). Interacts with LIMA1 (By similarity).</text>
</comment>
<comment type="interaction">
    <interactant intactId="EBI-975940">
        <id>P70569</id>
    </interactant>
    <interactant intactId="EBI-371642">
        <id>P19490</id>
        <label>Gria1</label>
    </interactant>
    <organismsDiffer>false</organismsDiffer>
    <experiments>2</experiments>
</comment>
<comment type="subcellular location">
    <subcellularLocation>
        <location evidence="10">Cytoplasm</location>
    </subcellularLocation>
</comment>
<comment type="similarity">
    <text evidence="11">Belongs to the TRAFAC class myosin-kinesin ATPase superfamily. Myosin family.</text>
</comment>
<gene>
    <name type="primary">Myo5b</name>
</gene>
<protein>
    <recommendedName>
        <fullName>Unconventional myosin-Vb</fullName>
    </recommendedName>
    <alternativeName>
        <fullName>Myosin heavy chain myr 6</fullName>
    </alternativeName>
</protein>
<keyword id="KW-0009">Actin-binding</keyword>
<keyword id="KW-0067">ATP-binding</keyword>
<keyword id="KW-0112">Calmodulin-binding</keyword>
<keyword id="KW-0175">Coiled coil</keyword>
<keyword id="KW-0963">Cytoplasm</keyword>
<keyword id="KW-0505">Motor protein</keyword>
<keyword id="KW-0518">Myosin</keyword>
<keyword id="KW-0547">Nucleotide-binding</keyword>
<keyword id="KW-0597">Phosphoprotein</keyword>
<keyword id="KW-0653">Protein transport</keyword>
<keyword id="KW-1185">Reference proteome</keyword>
<keyword id="KW-0677">Repeat</keyword>
<keyword id="KW-0813">Transport</keyword>
<accession>P70569</accession>
<feature type="chain" id="PRO_0000123462" description="Unconventional myosin-Vb">
    <location>
        <begin position="1"/>
        <end position="1846"/>
    </location>
</feature>
<feature type="domain" description="Myosin N-terminal SH3-like" evidence="8">
    <location>
        <begin position="8"/>
        <end position="60"/>
    </location>
</feature>
<feature type="domain" description="Myosin motor" evidence="7">
    <location>
        <begin position="69"/>
        <end position="763"/>
    </location>
</feature>
<feature type="domain" description="IQ 1" evidence="5">
    <location>
        <begin position="767"/>
        <end position="788"/>
    </location>
</feature>
<feature type="domain" description="IQ 2" evidence="5">
    <location>
        <begin position="789"/>
        <end position="813"/>
    </location>
</feature>
<feature type="domain" description="IQ 3" evidence="5">
    <location>
        <begin position="814"/>
        <end position="837"/>
    </location>
</feature>
<feature type="domain" description="IQ 4" evidence="5">
    <location>
        <begin position="838"/>
        <end position="861"/>
    </location>
</feature>
<feature type="domain" description="IQ 5" evidence="5">
    <location>
        <begin position="862"/>
        <end position="884"/>
    </location>
</feature>
<feature type="domain" description="IQ 6" evidence="5">
    <location>
        <begin position="885"/>
        <end position="914"/>
    </location>
</feature>
<feature type="domain" description="Dilute" evidence="6">
    <location>
        <begin position="1524"/>
        <end position="1801"/>
    </location>
</feature>
<feature type="region of interest" description="Requires for interaction with LIMA1" evidence="3">
    <location>
        <begin position="21"/>
        <end position="40"/>
    </location>
</feature>
<feature type="region of interest" description="Disordered" evidence="9">
    <location>
        <begin position="599"/>
        <end position="629"/>
    </location>
</feature>
<feature type="region of interest" description="Actin-binding" evidence="4">
    <location>
        <begin position="641"/>
        <end position="663"/>
    </location>
</feature>
<feature type="region of interest" description="Disordered" evidence="9">
    <location>
        <begin position="1088"/>
        <end position="1122"/>
    </location>
</feature>
<feature type="coiled-coil region" evidence="4">
    <location>
        <begin position="915"/>
        <end position="1272"/>
    </location>
</feature>
<feature type="coiled-coil region" evidence="4">
    <location>
        <begin position="1334"/>
        <end position="1450"/>
    </location>
</feature>
<feature type="compositionally biased region" description="Low complexity" evidence="9">
    <location>
        <begin position="607"/>
        <end position="619"/>
    </location>
</feature>
<feature type="compositionally biased region" description="Polar residues" evidence="9">
    <location>
        <begin position="1100"/>
        <end position="1120"/>
    </location>
</feature>
<feature type="binding site" evidence="4">
    <location>
        <begin position="163"/>
        <end position="170"/>
    </location>
    <ligand>
        <name>ATP</name>
        <dbReference type="ChEBI" id="CHEBI:30616"/>
    </ligand>
</feature>
<feature type="modified residue" description="Phosphoserine" evidence="3">
    <location>
        <position position="1444"/>
    </location>
</feature>
<dbReference type="EMBL" id="U60416">
    <property type="protein sequence ID" value="AAB38840.1"/>
    <property type="molecule type" value="mRNA"/>
</dbReference>
<dbReference type="PIR" id="A59289">
    <property type="entry name" value="A59289"/>
</dbReference>
<dbReference type="RefSeq" id="NP_058779.1">
    <property type="nucleotide sequence ID" value="NM_017083.1"/>
</dbReference>
<dbReference type="SMR" id="P70569"/>
<dbReference type="BioGRID" id="247201">
    <property type="interactions" value="3"/>
</dbReference>
<dbReference type="FunCoup" id="P70569">
    <property type="interactions" value="745"/>
</dbReference>
<dbReference type="IntAct" id="P70569">
    <property type="interactions" value="8"/>
</dbReference>
<dbReference type="STRING" id="10116.ENSRNOP00000072468"/>
<dbReference type="iPTMnet" id="P70569"/>
<dbReference type="PhosphoSitePlus" id="P70569"/>
<dbReference type="jPOST" id="P70569"/>
<dbReference type="PaxDb" id="10116-ENSRNOP00000019512"/>
<dbReference type="GeneID" id="25132"/>
<dbReference type="KEGG" id="rno:25132"/>
<dbReference type="AGR" id="RGD:621347"/>
<dbReference type="CTD" id="4645"/>
<dbReference type="RGD" id="621347">
    <property type="gene designation" value="Myo5b"/>
</dbReference>
<dbReference type="eggNOG" id="KOG0160">
    <property type="taxonomic scope" value="Eukaryota"/>
</dbReference>
<dbReference type="InParanoid" id="P70569"/>
<dbReference type="PhylomeDB" id="P70569"/>
<dbReference type="Reactome" id="R-RNO-432040">
    <property type="pathway name" value="Vasopressin regulates renal water homeostasis via Aquaporins"/>
</dbReference>
<dbReference type="PRO" id="PR:P70569"/>
<dbReference type="Proteomes" id="UP000002494">
    <property type="component" value="Unplaced"/>
</dbReference>
<dbReference type="GO" id="GO:0015629">
    <property type="term" value="C:actin cytoskeleton"/>
    <property type="evidence" value="ECO:0000318"/>
    <property type="project" value="GO_Central"/>
</dbReference>
<dbReference type="GO" id="GO:0045179">
    <property type="term" value="C:apical cortex"/>
    <property type="evidence" value="ECO:0000250"/>
    <property type="project" value="UniProtKB"/>
</dbReference>
<dbReference type="GO" id="GO:0005903">
    <property type="term" value="C:brush border"/>
    <property type="evidence" value="ECO:0000266"/>
    <property type="project" value="RGD"/>
</dbReference>
<dbReference type="GO" id="GO:0005737">
    <property type="term" value="C:cytoplasm"/>
    <property type="evidence" value="ECO:0000318"/>
    <property type="project" value="GO_Central"/>
</dbReference>
<dbReference type="GO" id="GO:0043197">
    <property type="term" value="C:dendritic spine"/>
    <property type="evidence" value="ECO:0000314"/>
    <property type="project" value="RGD"/>
</dbReference>
<dbReference type="GO" id="GO:0098978">
    <property type="term" value="C:glutamatergic synapse"/>
    <property type="evidence" value="ECO:0000314"/>
    <property type="project" value="SynGO"/>
</dbReference>
<dbReference type="GO" id="GO:0016020">
    <property type="term" value="C:membrane"/>
    <property type="evidence" value="ECO:0000318"/>
    <property type="project" value="GO_Central"/>
</dbReference>
<dbReference type="GO" id="GO:0016459">
    <property type="term" value="C:myosin complex"/>
    <property type="evidence" value="ECO:0007669"/>
    <property type="project" value="UniProtKB-KW"/>
</dbReference>
<dbReference type="GO" id="GO:0043025">
    <property type="term" value="C:neuronal cell body"/>
    <property type="evidence" value="ECO:0000314"/>
    <property type="project" value="RGD"/>
</dbReference>
<dbReference type="GO" id="GO:0048471">
    <property type="term" value="C:perinuclear region of cytoplasm"/>
    <property type="evidence" value="ECO:0000314"/>
    <property type="project" value="RGD"/>
</dbReference>
<dbReference type="GO" id="GO:0098794">
    <property type="term" value="C:postsynapse"/>
    <property type="evidence" value="ECO:0000314"/>
    <property type="project" value="SynGO"/>
</dbReference>
<dbReference type="GO" id="GO:0098871">
    <property type="term" value="C:postsynaptic actin cytoskeleton"/>
    <property type="evidence" value="ECO:0000314"/>
    <property type="project" value="SynGO"/>
</dbReference>
<dbReference type="GO" id="GO:0098944">
    <property type="term" value="C:postsynaptic recycling endosome membrane"/>
    <property type="evidence" value="ECO:0000314"/>
    <property type="project" value="SynGO"/>
</dbReference>
<dbReference type="GO" id="GO:0098793">
    <property type="term" value="C:presynapse"/>
    <property type="evidence" value="ECO:0007669"/>
    <property type="project" value="GOC"/>
</dbReference>
<dbReference type="GO" id="GO:0032991">
    <property type="term" value="C:protein-containing complex"/>
    <property type="evidence" value="ECO:0000266"/>
    <property type="project" value="RGD"/>
</dbReference>
<dbReference type="GO" id="GO:0055037">
    <property type="term" value="C:recycling endosome"/>
    <property type="evidence" value="ECO:0000314"/>
    <property type="project" value="RGD"/>
</dbReference>
<dbReference type="GO" id="GO:0098685">
    <property type="term" value="C:Schaffer collateral - CA1 synapse"/>
    <property type="evidence" value="ECO:0000314"/>
    <property type="project" value="SynGO"/>
</dbReference>
<dbReference type="GO" id="GO:0051015">
    <property type="term" value="F:actin filament binding"/>
    <property type="evidence" value="ECO:0000318"/>
    <property type="project" value="GO_Central"/>
</dbReference>
<dbReference type="GO" id="GO:0005524">
    <property type="term" value="F:ATP binding"/>
    <property type="evidence" value="ECO:0007669"/>
    <property type="project" value="UniProtKB-KW"/>
</dbReference>
<dbReference type="GO" id="GO:0016887">
    <property type="term" value="F:ATP hydrolysis activity"/>
    <property type="evidence" value="ECO:0000314"/>
    <property type="project" value="RGD"/>
</dbReference>
<dbReference type="GO" id="GO:0005516">
    <property type="term" value="F:calmodulin binding"/>
    <property type="evidence" value="ECO:0007669"/>
    <property type="project" value="UniProtKB-KW"/>
</dbReference>
<dbReference type="GO" id="GO:0035255">
    <property type="term" value="F:ionotropic glutamate receptor binding"/>
    <property type="evidence" value="ECO:0000353"/>
    <property type="project" value="RGD"/>
</dbReference>
<dbReference type="GO" id="GO:0000146">
    <property type="term" value="F:microfilament motor activity"/>
    <property type="evidence" value="ECO:0000318"/>
    <property type="project" value="GO_Central"/>
</dbReference>
<dbReference type="GO" id="GO:0031267">
    <property type="term" value="F:small GTPase binding"/>
    <property type="evidence" value="ECO:0000353"/>
    <property type="project" value="RGD"/>
</dbReference>
<dbReference type="GO" id="GO:0007015">
    <property type="term" value="P:actin filament organization"/>
    <property type="evidence" value="ECO:0000318"/>
    <property type="project" value="GO_Central"/>
</dbReference>
<dbReference type="GO" id="GO:1905430">
    <property type="term" value="P:cellular response to glycine"/>
    <property type="evidence" value="ECO:0000270"/>
    <property type="project" value="RGD"/>
</dbReference>
<dbReference type="GO" id="GO:0060997">
    <property type="term" value="P:dendritic spine morphogenesis"/>
    <property type="evidence" value="ECO:0000315"/>
    <property type="project" value="RGD"/>
</dbReference>
<dbReference type="GO" id="GO:0016197">
    <property type="term" value="P:endosomal transport"/>
    <property type="evidence" value="ECO:0000250"/>
    <property type="project" value="UniProtKB"/>
</dbReference>
<dbReference type="GO" id="GO:0050804">
    <property type="term" value="P:modulation of chemical synaptic transmission"/>
    <property type="evidence" value="ECO:0000266"/>
    <property type="project" value="RGD"/>
</dbReference>
<dbReference type="GO" id="GO:0099639">
    <property type="term" value="P:neurotransmitter receptor transport, endosome to plasma membrane"/>
    <property type="evidence" value="ECO:0000314"/>
    <property type="project" value="SynGO"/>
</dbReference>
<dbReference type="GO" id="GO:0045773">
    <property type="term" value="P:positive regulation of axon extension"/>
    <property type="evidence" value="ECO:0000315"/>
    <property type="project" value="RGD"/>
</dbReference>
<dbReference type="GO" id="GO:0050775">
    <property type="term" value="P:positive regulation of dendrite morphogenesis"/>
    <property type="evidence" value="ECO:0000315"/>
    <property type="project" value="RGD"/>
</dbReference>
<dbReference type="GO" id="GO:1903543">
    <property type="term" value="P:positive regulation of exosomal secretion"/>
    <property type="evidence" value="ECO:0000315"/>
    <property type="project" value="RGD"/>
</dbReference>
<dbReference type="GO" id="GO:1903078">
    <property type="term" value="P:positive regulation of protein localization to plasma membrane"/>
    <property type="evidence" value="ECO:0000315"/>
    <property type="project" value="RGD"/>
</dbReference>
<dbReference type="GO" id="GO:0071806">
    <property type="term" value="P:protein transmembrane transport"/>
    <property type="evidence" value="ECO:0000266"/>
    <property type="project" value="RGD"/>
</dbReference>
<dbReference type="GO" id="GO:0099159">
    <property type="term" value="P:regulation of modification of postsynaptic structure"/>
    <property type="evidence" value="ECO:0000314"/>
    <property type="project" value="SynGO"/>
</dbReference>
<dbReference type="GO" id="GO:0032880">
    <property type="term" value="P:regulation of protein localization"/>
    <property type="evidence" value="ECO:0000315"/>
    <property type="project" value="RGD"/>
</dbReference>
<dbReference type="GO" id="GO:0036466">
    <property type="term" value="P:synaptic vesicle recycling via endosome"/>
    <property type="evidence" value="ECO:0000314"/>
    <property type="project" value="SynGO"/>
</dbReference>
<dbReference type="GO" id="GO:0016192">
    <property type="term" value="P:vesicle-mediated transport"/>
    <property type="evidence" value="ECO:0000266"/>
    <property type="project" value="RGD"/>
</dbReference>
<dbReference type="GO" id="GO:0099003">
    <property type="term" value="P:vesicle-mediated transport in synapse"/>
    <property type="evidence" value="ECO:0000314"/>
    <property type="project" value="SynGO"/>
</dbReference>
<dbReference type="CDD" id="cd23767">
    <property type="entry name" value="IQCD"/>
    <property type="match status" value="1"/>
</dbReference>
<dbReference type="CDD" id="cd15477">
    <property type="entry name" value="Myo5b_CBD"/>
    <property type="match status" value="1"/>
</dbReference>
<dbReference type="CDD" id="cd01380">
    <property type="entry name" value="MYSc_Myo5"/>
    <property type="match status" value="1"/>
</dbReference>
<dbReference type="FunFam" id="1.20.58.530:FF:000002">
    <property type="entry name" value="Class V myosin"/>
    <property type="match status" value="1"/>
</dbReference>
<dbReference type="FunFam" id="1.10.10.820:FF:000001">
    <property type="entry name" value="Myosin heavy chain"/>
    <property type="match status" value="1"/>
</dbReference>
<dbReference type="FunFam" id="1.20.5.190:FF:000006">
    <property type="entry name" value="Myosin VA"/>
    <property type="match status" value="1"/>
</dbReference>
<dbReference type="FunFam" id="1.20.120.720:FF:000016">
    <property type="entry name" value="Myosin VB"/>
    <property type="match status" value="1"/>
</dbReference>
<dbReference type="FunFam" id="3.30.70.1590:FF:000003">
    <property type="entry name" value="Myosin-Va isoform 1"/>
    <property type="match status" value="1"/>
</dbReference>
<dbReference type="FunFam" id="1.20.5.190:FF:000001">
    <property type="entry name" value="unconventional myosin-Va"/>
    <property type="match status" value="1"/>
</dbReference>
<dbReference type="Gene3D" id="1.10.10.820">
    <property type="match status" value="1"/>
</dbReference>
<dbReference type="Gene3D" id="1.20.5.190">
    <property type="match status" value="3"/>
</dbReference>
<dbReference type="Gene3D" id="1.20.58.530">
    <property type="match status" value="1"/>
</dbReference>
<dbReference type="Gene3D" id="6.20.240.20">
    <property type="match status" value="1"/>
</dbReference>
<dbReference type="Gene3D" id="3.40.850.10">
    <property type="entry name" value="Kinesin motor domain"/>
    <property type="match status" value="1"/>
</dbReference>
<dbReference type="Gene3D" id="1.20.120.720">
    <property type="entry name" value="Myosin VI head, motor domain, U50 subdomain"/>
    <property type="match status" value="1"/>
</dbReference>
<dbReference type="InterPro" id="IPR002710">
    <property type="entry name" value="Dilute_dom"/>
</dbReference>
<dbReference type="InterPro" id="IPR000048">
    <property type="entry name" value="IQ_motif_EF-hand-BS"/>
</dbReference>
<dbReference type="InterPro" id="IPR036961">
    <property type="entry name" value="Kinesin_motor_dom_sf"/>
</dbReference>
<dbReference type="InterPro" id="IPR037990">
    <property type="entry name" value="Myo5b_CBD"/>
</dbReference>
<dbReference type="InterPro" id="IPR001609">
    <property type="entry name" value="Myosin_head_motor_dom-like"/>
</dbReference>
<dbReference type="InterPro" id="IPR004009">
    <property type="entry name" value="Myosin_N"/>
</dbReference>
<dbReference type="InterPro" id="IPR036103">
    <property type="entry name" value="MYSc_Myo5"/>
</dbReference>
<dbReference type="InterPro" id="IPR027417">
    <property type="entry name" value="P-loop_NTPase"/>
</dbReference>
<dbReference type="PANTHER" id="PTHR13140">
    <property type="entry name" value="MYOSIN"/>
    <property type="match status" value="1"/>
</dbReference>
<dbReference type="PANTHER" id="PTHR13140:SF356">
    <property type="entry name" value="UNCONVENTIONAL MYOSIN-VB"/>
    <property type="match status" value="1"/>
</dbReference>
<dbReference type="Pfam" id="PF01843">
    <property type="entry name" value="DIL"/>
    <property type="match status" value="1"/>
</dbReference>
<dbReference type="Pfam" id="PF00612">
    <property type="entry name" value="IQ"/>
    <property type="match status" value="6"/>
</dbReference>
<dbReference type="Pfam" id="PF00063">
    <property type="entry name" value="Myosin_head"/>
    <property type="match status" value="1"/>
</dbReference>
<dbReference type="PRINTS" id="PR00193">
    <property type="entry name" value="MYOSINHEAVY"/>
</dbReference>
<dbReference type="SMART" id="SM01132">
    <property type="entry name" value="DIL"/>
    <property type="match status" value="1"/>
</dbReference>
<dbReference type="SMART" id="SM00015">
    <property type="entry name" value="IQ"/>
    <property type="match status" value="6"/>
</dbReference>
<dbReference type="SMART" id="SM00242">
    <property type="entry name" value="MYSc"/>
    <property type="match status" value="1"/>
</dbReference>
<dbReference type="SUPFAM" id="SSF52540">
    <property type="entry name" value="P-loop containing nucleoside triphosphate hydrolases"/>
    <property type="match status" value="2"/>
</dbReference>
<dbReference type="PROSITE" id="PS51126">
    <property type="entry name" value="DILUTE"/>
    <property type="match status" value="1"/>
</dbReference>
<dbReference type="PROSITE" id="PS50096">
    <property type="entry name" value="IQ"/>
    <property type="match status" value="6"/>
</dbReference>
<dbReference type="PROSITE" id="PS51456">
    <property type="entry name" value="MYOSIN_MOTOR"/>
    <property type="match status" value="1"/>
</dbReference>
<dbReference type="PROSITE" id="PS51844">
    <property type="entry name" value="SH3_LIKE"/>
    <property type="match status" value="1"/>
</dbReference>
<reference key="1">
    <citation type="journal article" date="1996" name="Proc. Natl. Acad. Sci. U.S.A.">
        <title>Cloning and characterization of myr 6, an unconventional myosin of the dilute/myosin-V family.</title>
        <authorList>
            <person name="Zhao L.P."/>
            <person name="Koslovsky J.S."/>
            <person name="Reinhard J."/>
            <person name="Bahler M."/>
            <person name="Witt A.E."/>
            <person name="Provance D.W."/>
            <person name="Mercer J.A."/>
        </authorList>
    </citation>
    <scope>NUCLEOTIDE SEQUENCE [MRNA]</scope>
</reference>
<reference key="2">
    <citation type="journal article" date="1992" name="J. Cell Biol.">
        <title>Primary structure and cellular localization of chicken brain myosin-V (p190), an unconventional myosin with calmodulin light chains.</title>
        <authorList>
            <person name="Espreafico E.M."/>
            <person name="Cheney R.E."/>
            <person name="Matteoli M."/>
            <person name="Nascimento A.A."/>
            <person name="de Camilli P.V."/>
            <person name="Larson R.E."/>
            <person name="Mooseker M.S."/>
        </authorList>
    </citation>
    <scope>SUBCELLULAR LOCATION</scope>
</reference>
<name>MYO5B_RAT</name>